<feature type="chain" id="PRO_0000143870" description="Uridylate kinase">
    <location>
        <begin position="1"/>
        <end position="245"/>
    </location>
</feature>
<feature type="binding site" evidence="1">
    <location>
        <begin position="18"/>
        <end position="21"/>
    </location>
    <ligand>
        <name>ATP</name>
        <dbReference type="ChEBI" id="CHEBI:30616"/>
    </ligand>
</feature>
<feature type="binding site" evidence="1">
    <location>
        <position position="60"/>
    </location>
    <ligand>
        <name>UMP</name>
        <dbReference type="ChEBI" id="CHEBI:57865"/>
    </ligand>
</feature>
<feature type="binding site" evidence="1">
    <location>
        <position position="61"/>
    </location>
    <ligand>
        <name>ATP</name>
        <dbReference type="ChEBI" id="CHEBI:30616"/>
    </ligand>
</feature>
<feature type="binding site" evidence="1">
    <location>
        <position position="65"/>
    </location>
    <ligand>
        <name>ATP</name>
        <dbReference type="ChEBI" id="CHEBI:30616"/>
    </ligand>
</feature>
<feature type="binding site" evidence="1">
    <location>
        <position position="80"/>
    </location>
    <ligand>
        <name>UMP</name>
        <dbReference type="ChEBI" id="CHEBI:57865"/>
    </ligand>
</feature>
<feature type="binding site" evidence="1">
    <location>
        <begin position="141"/>
        <end position="148"/>
    </location>
    <ligand>
        <name>UMP</name>
        <dbReference type="ChEBI" id="CHEBI:57865"/>
    </ligand>
</feature>
<feature type="binding site" evidence="1">
    <location>
        <position position="168"/>
    </location>
    <ligand>
        <name>ATP</name>
        <dbReference type="ChEBI" id="CHEBI:30616"/>
    </ligand>
</feature>
<feature type="binding site" evidence="1">
    <location>
        <position position="174"/>
    </location>
    <ligand>
        <name>ATP</name>
        <dbReference type="ChEBI" id="CHEBI:30616"/>
    </ligand>
</feature>
<feature type="binding site" evidence="1">
    <location>
        <position position="177"/>
    </location>
    <ligand>
        <name>ATP</name>
        <dbReference type="ChEBI" id="CHEBI:30616"/>
    </ligand>
</feature>
<feature type="sequence conflict" description="In Ref. 1; BAA32344." evidence="2" ref="1">
    <original>MSAISMVGVTDHYDRRKAMR</original>
    <variation>CRSYLHGRCDRPLRPPQGHA</variation>
    <location>
        <begin position="108"/>
        <end position="127"/>
    </location>
</feature>
<dbReference type="EC" id="2.7.4.22" evidence="1"/>
<dbReference type="EMBL" id="AB010087">
    <property type="protein sequence ID" value="BAA32344.1"/>
    <property type="molecule type" value="Genomic_DNA"/>
</dbReference>
<dbReference type="EMBL" id="AE004091">
    <property type="protein sequence ID" value="AAG07042.1"/>
    <property type="molecule type" value="Genomic_DNA"/>
</dbReference>
<dbReference type="PIR" id="A83189">
    <property type="entry name" value="A83189"/>
</dbReference>
<dbReference type="RefSeq" id="NP_252344.1">
    <property type="nucleotide sequence ID" value="NC_002516.2"/>
</dbReference>
<dbReference type="RefSeq" id="WP_003092391.1">
    <property type="nucleotide sequence ID" value="NZ_QZGE01000001.1"/>
</dbReference>
<dbReference type="SMR" id="O82852"/>
<dbReference type="FunCoup" id="O82852">
    <property type="interactions" value="766"/>
</dbReference>
<dbReference type="STRING" id="208964.PA3654"/>
<dbReference type="PaxDb" id="208964-PA3654"/>
<dbReference type="DNASU" id="880536"/>
<dbReference type="GeneID" id="880536"/>
<dbReference type="KEGG" id="pae:PA3654"/>
<dbReference type="PATRIC" id="fig|208964.12.peg.3823"/>
<dbReference type="PseudoCAP" id="PA3654"/>
<dbReference type="HOGENOM" id="CLU_033861_0_0_6"/>
<dbReference type="InParanoid" id="O82852"/>
<dbReference type="OrthoDB" id="9807458at2"/>
<dbReference type="PhylomeDB" id="O82852"/>
<dbReference type="BioCyc" id="PAER208964:G1FZ6-3724-MONOMER"/>
<dbReference type="UniPathway" id="UPA00159">
    <property type="reaction ID" value="UER00275"/>
</dbReference>
<dbReference type="Proteomes" id="UP000002438">
    <property type="component" value="Chromosome"/>
</dbReference>
<dbReference type="GO" id="GO:0005829">
    <property type="term" value="C:cytosol"/>
    <property type="evidence" value="ECO:0000318"/>
    <property type="project" value="GO_Central"/>
</dbReference>
<dbReference type="GO" id="GO:0005524">
    <property type="term" value="F:ATP binding"/>
    <property type="evidence" value="ECO:0007669"/>
    <property type="project" value="UniProtKB-KW"/>
</dbReference>
<dbReference type="GO" id="GO:0033862">
    <property type="term" value="F:UMP kinase activity"/>
    <property type="evidence" value="ECO:0000318"/>
    <property type="project" value="GO_Central"/>
</dbReference>
<dbReference type="GO" id="GO:0044210">
    <property type="term" value="P:'de novo' CTP biosynthetic process"/>
    <property type="evidence" value="ECO:0007669"/>
    <property type="project" value="UniProtKB-UniRule"/>
</dbReference>
<dbReference type="GO" id="GO:0006225">
    <property type="term" value="P:UDP biosynthetic process"/>
    <property type="evidence" value="ECO:0000318"/>
    <property type="project" value="GO_Central"/>
</dbReference>
<dbReference type="CDD" id="cd04254">
    <property type="entry name" value="AAK_UMPK-PyrH-Ec"/>
    <property type="match status" value="1"/>
</dbReference>
<dbReference type="FunFam" id="3.40.1160.10:FF:000001">
    <property type="entry name" value="Uridylate kinase"/>
    <property type="match status" value="1"/>
</dbReference>
<dbReference type="Gene3D" id="3.40.1160.10">
    <property type="entry name" value="Acetylglutamate kinase-like"/>
    <property type="match status" value="1"/>
</dbReference>
<dbReference type="HAMAP" id="MF_01220_B">
    <property type="entry name" value="PyrH_B"/>
    <property type="match status" value="1"/>
</dbReference>
<dbReference type="InterPro" id="IPR036393">
    <property type="entry name" value="AceGlu_kinase-like_sf"/>
</dbReference>
<dbReference type="InterPro" id="IPR001048">
    <property type="entry name" value="Asp/Glu/Uridylate_kinase"/>
</dbReference>
<dbReference type="InterPro" id="IPR011817">
    <property type="entry name" value="Uridylate_kinase"/>
</dbReference>
<dbReference type="InterPro" id="IPR015963">
    <property type="entry name" value="Uridylate_kinase_bac"/>
</dbReference>
<dbReference type="NCBIfam" id="TIGR02075">
    <property type="entry name" value="pyrH_bact"/>
    <property type="match status" value="1"/>
</dbReference>
<dbReference type="PANTHER" id="PTHR42833">
    <property type="entry name" value="URIDYLATE KINASE"/>
    <property type="match status" value="1"/>
</dbReference>
<dbReference type="PANTHER" id="PTHR42833:SF4">
    <property type="entry name" value="URIDYLATE KINASE PUMPKIN, CHLOROPLASTIC"/>
    <property type="match status" value="1"/>
</dbReference>
<dbReference type="Pfam" id="PF00696">
    <property type="entry name" value="AA_kinase"/>
    <property type="match status" value="1"/>
</dbReference>
<dbReference type="PIRSF" id="PIRSF005650">
    <property type="entry name" value="Uridylate_kin"/>
    <property type="match status" value="1"/>
</dbReference>
<dbReference type="SUPFAM" id="SSF53633">
    <property type="entry name" value="Carbamate kinase-like"/>
    <property type="match status" value="1"/>
</dbReference>
<protein>
    <recommendedName>
        <fullName evidence="1">Uridylate kinase</fullName>
        <shortName evidence="1">UK</shortName>
        <ecNumber evidence="1">2.7.4.22</ecNumber>
    </recommendedName>
    <alternativeName>
        <fullName evidence="1">Uridine monophosphate kinase</fullName>
        <shortName evidence="1">UMP kinase</shortName>
        <shortName evidence="1">UMPK</shortName>
    </alternativeName>
</protein>
<name>PYRH_PSEAE</name>
<organism>
    <name type="scientific">Pseudomonas aeruginosa (strain ATCC 15692 / DSM 22644 / CIP 104116 / JCM 14847 / LMG 12228 / 1C / PRS 101 / PAO1)</name>
    <dbReference type="NCBI Taxonomy" id="208964"/>
    <lineage>
        <taxon>Bacteria</taxon>
        <taxon>Pseudomonadati</taxon>
        <taxon>Pseudomonadota</taxon>
        <taxon>Gammaproteobacteria</taxon>
        <taxon>Pseudomonadales</taxon>
        <taxon>Pseudomonadaceae</taxon>
        <taxon>Pseudomonas</taxon>
    </lineage>
</organism>
<gene>
    <name evidence="1" type="primary">pyrH</name>
    <name type="ordered locus">PA3654</name>
</gene>
<comment type="function">
    <text evidence="1">Catalyzes the reversible phosphorylation of UMP to UDP.</text>
</comment>
<comment type="catalytic activity">
    <reaction evidence="1">
        <text>UMP + ATP = UDP + ADP</text>
        <dbReference type="Rhea" id="RHEA:24400"/>
        <dbReference type="ChEBI" id="CHEBI:30616"/>
        <dbReference type="ChEBI" id="CHEBI:57865"/>
        <dbReference type="ChEBI" id="CHEBI:58223"/>
        <dbReference type="ChEBI" id="CHEBI:456216"/>
        <dbReference type="EC" id="2.7.4.22"/>
    </reaction>
</comment>
<comment type="activity regulation">
    <text evidence="1">Inhibited by UTP.</text>
</comment>
<comment type="pathway">
    <text evidence="1">Pyrimidine metabolism; CTP biosynthesis via de novo pathway; UDP from UMP (UMPK route): step 1/1.</text>
</comment>
<comment type="subunit">
    <text evidence="1">Homohexamer.</text>
</comment>
<comment type="subcellular location">
    <subcellularLocation>
        <location evidence="1">Cytoplasm</location>
    </subcellularLocation>
</comment>
<comment type="similarity">
    <text evidence="1">Belongs to the UMP kinase family.</text>
</comment>
<evidence type="ECO:0000255" key="1">
    <source>
        <dbReference type="HAMAP-Rule" id="MF_01220"/>
    </source>
</evidence>
<evidence type="ECO:0000305" key="2"/>
<reference key="1">
    <citation type="journal article" date="1999" name="J. Bacteriol.">
        <title>Molecular cloning, sequencing, purification, and characterization of Pseudomonas aeruginosa ribosome recycling factor.</title>
        <authorList>
            <person name="Ohnishi M."/>
            <person name="Janosi L."/>
            <person name="Shuda M."/>
            <person name="Matsumoto H."/>
            <person name="Hayashi T."/>
            <person name="Terawaki Y."/>
            <person name="Kaji A."/>
        </authorList>
    </citation>
    <scope>NUCLEOTIDE SEQUENCE [GENOMIC DNA]</scope>
    <source>
        <strain>ATCC 15692 / DSM 22644 / CIP 104116 / JCM 14847 / LMG 12228 / 1C / PRS 101 / PAO1</strain>
    </source>
</reference>
<reference key="2">
    <citation type="journal article" date="2000" name="Nature">
        <title>Complete genome sequence of Pseudomonas aeruginosa PAO1, an opportunistic pathogen.</title>
        <authorList>
            <person name="Stover C.K."/>
            <person name="Pham X.-Q.T."/>
            <person name="Erwin A.L."/>
            <person name="Mizoguchi S.D."/>
            <person name="Warrener P."/>
            <person name="Hickey M.J."/>
            <person name="Brinkman F.S.L."/>
            <person name="Hufnagle W.O."/>
            <person name="Kowalik D.J."/>
            <person name="Lagrou M."/>
            <person name="Garber R.L."/>
            <person name="Goltry L."/>
            <person name="Tolentino E."/>
            <person name="Westbrock-Wadman S."/>
            <person name="Yuan Y."/>
            <person name="Brody L.L."/>
            <person name="Coulter S.N."/>
            <person name="Folger K.R."/>
            <person name="Kas A."/>
            <person name="Larbig K."/>
            <person name="Lim R.M."/>
            <person name="Smith K.A."/>
            <person name="Spencer D.H."/>
            <person name="Wong G.K.-S."/>
            <person name="Wu Z."/>
            <person name="Paulsen I.T."/>
            <person name="Reizer J."/>
            <person name="Saier M.H. Jr."/>
            <person name="Hancock R.E.W."/>
            <person name="Lory S."/>
            <person name="Olson M.V."/>
        </authorList>
    </citation>
    <scope>NUCLEOTIDE SEQUENCE [LARGE SCALE GENOMIC DNA]</scope>
    <source>
        <strain>ATCC 15692 / DSM 22644 / CIP 104116 / JCM 14847 / LMG 12228 / 1C / PRS 101 / PAO1</strain>
    </source>
</reference>
<proteinExistence type="inferred from homology"/>
<sequence length="245" mass="26273">MAQQLSARQPRYKRILLKLSGEALMGSEEFGIDPKVLDRMALEIGQLVGIGVQVGLVIGGGNLFRGAALSAAGMDRVTGDHMGMLATVMNGLAMRDALERSNIPALVMSAISMVGVTDHYDRRKAMRHLGGGEVVIFSAGTGNPFFTTDSAACLRAIEIDADVVLKATKVDGVYTADPFKDPNAEKFERLTYDEVLDRKLGVMDLTAICLCRDQNMPLRVFNMNKPGALLNIVVGGAEGTLIEEG</sequence>
<accession>O82852</accession>
<keyword id="KW-0067">ATP-binding</keyword>
<keyword id="KW-0963">Cytoplasm</keyword>
<keyword id="KW-0418">Kinase</keyword>
<keyword id="KW-0547">Nucleotide-binding</keyword>
<keyword id="KW-0665">Pyrimidine biosynthesis</keyword>
<keyword id="KW-1185">Reference proteome</keyword>
<keyword id="KW-0808">Transferase</keyword>